<protein>
    <recommendedName>
        <fullName>UPF0758 protein Sputw3181_0338</fullName>
    </recommendedName>
</protein>
<keyword id="KW-0378">Hydrolase</keyword>
<keyword id="KW-0479">Metal-binding</keyword>
<keyword id="KW-0482">Metalloprotease</keyword>
<keyword id="KW-0645">Protease</keyword>
<keyword id="KW-0862">Zinc</keyword>
<comment type="similarity">
    <text evidence="2">Belongs to the UPF0758 family.</text>
</comment>
<sequence>MGIKDWPEGEGPRDKLLQKGAAYLSDAELLAVLLRNGLAGLNAVDLARSLISEFGGLRNLLCAPKNQVCRLPGVGPVKYAQLQAAAELARRVAQENLQRGQVLTNPDLTRDYLMRQLTDRSYEVFAILLLDSQHRVIQFVELFRGTIDSASVYPREVVSLVLEKKAAAVIVCHNHPSGIAEPSQADRRITERLKNALATIDVSLLDHMVVGDREIVSFAERGWIN</sequence>
<reference key="1">
    <citation type="submission" date="2006-12" db="EMBL/GenBank/DDBJ databases">
        <title>Complete sequence of Shewanella sp. W3-18-1.</title>
        <authorList>
            <consortium name="US DOE Joint Genome Institute"/>
            <person name="Copeland A."/>
            <person name="Lucas S."/>
            <person name="Lapidus A."/>
            <person name="Barry K."/>
            <person name="Detter J.C."/>
            <person name="Glavina del Rio T."/>
            <person name="Hammon N."/>
            <person name="Israni S."/>
            <person name="Dalin E."/>
            <person name="Tice H."/>
            <person name="Pitluck S."/>
            <person name="Chain P."/>
            <person name="Malfatti S."/>
            <person name="Shin M."/>
            <person name="Vergez L."/>
            <person name="Schmutz J."/>
            <person name="Larimer F."/>
            <person name="Land M."/>
            <person name="Hauser L."/>
            <person name="Kyrpides N."/>
            <person name="Lykidis A."/>
            <person name="Tiedje J."/>
            <person name="Richardson P."/>
        </authorList>
    </citation>
    <scope>NUCLEOTIDE SEQUENCE [LARGE SCALE GENOMIC DNA]</scope>
    <source>
        <strain>W3-18-1</strain>
    </source>
</reference>
<gene>
    <name type="ordered locus">Sputw3181_0338</name>
</gene>
<feature type="chain" id="PRO_1000001698" description="UPF0758 protein Sputw3181_0338">
    <location>
        <begin position="1"/>
        <end position="225"/>
    </location>
</feature>
<feature type="domain" description="MPN" evidence="1">
    <location>
        <begin position="102"/>
        <end position="224"/>
    </location>
</feature>
<feature type="short sequence motif" description="JAMM motif" evidence="1">
    <location>
        <begin position="173"/>
        <end position="186"/>
    </location>
</feature>
<feature type="binding site" evidence="1">
    <location>
        <position position="173"/>
    </location>
    <ligand>
        <name>Zn(2+)</name>
        <dbReference type="ChEBI" id="CHEBI:29105"/>
        <note>catalytic</note>
    </ligand>
</feature>
<feature type="binding site" evidence="1">
    <location>
        <position position="175"/>
    </location>
    <ligand>
        <name>Zn(2+)</name>
        <dbReference type="ChEBI" id="CHEBI:29105"/>
        <note>catalytic</note>
    </ligand>
</feature>
<feature type="binding site" evidence="1">
    <location>
        <position position="186"/>
    </location>
    <ligand>
        <name>Zn(2+)</name>
        <dbReference type="ChEBI" id="CHEBI:29105"/>
        <note>catalytic</note>
    </ligand>
</feature>
<name>Y338_SHESW</name>
<organism>
    <name type="scientific">Shewanella sp. (strain W3-18-1)</name>
    <dbReference type="NCBI Taxonomy" id="351745"/>
    <lineage>
        <taxon>Bacteria</taxon>
        <taxon>Pseudomonadati</taxon>
        <taxon>Pseudomonadota</taxon>
        <taxon>Gammaproteobacteria</taxon>
        <taxon>Alteromonadales</taxon>
        <taxon>Shewanellaceae</taxon>
        <taxon>Shewanella</taxon>
    </lineage>
</organism>
<evidence type="ECO:0000255" key="1">
    <source>
        <dbReference type="PROSITE-ProRule" id="PRU01182"/>
    </source>
</evidence>
<evidence type="ECO:0000305" key="2"/>
<accession>A1REU4</accession>
<dbReference type="EMBL" id="CP000503">
    <property type="protein sequence ID" value="ABM23189.1"/>
    <property type="molecule type" value="Genomic_DNA"/>
</dbReference>
<dbReference type="SMR" id="A1REU4"/>
<dbReference type="KEGG" id="shw:Sputw3181_0338"/>
<dbReference type="HOGENOM" id="CLU_073529_0_1_6"/>
<dbReference type="Proteomes" id="UP000002597">
    <property type="component" value="Chromosome"/>
</dbReference>
<dbReference type="GO" id="GO:0046872">
    <property type="term" value="F:metal ion binding"/>
    <property type="evidence" value="ECO:0007669"/>
    <property type="project" value="UniProtKB-KW"/>
</dbReference>
<dbReference type="GO" id="GO:0008237">
    <property type="term" value="F:metallopeptidase activity"/>
    <property type="evidence" value="ECO:0007669"/>
    <property type="project" value="UniProtKB-KW"/>
</dbReference>
<dbReference type="GO" id="GO:0006508">
    <property type="term" value="P:proteolysis"/>
    <property type="evidence" value="ECO:0007669"/>
    <property type="project" value="UniProtKB-KW"/>
</dbReference>
<dbReference type="CDD" id="cd08071">
    <property type="entry name" value="MPN_DUF2466"/>
    <property type="match status" value="1"/>
</dbReference>
<dbReference type="FunFam" id="3.40.140.10:FF:000032">
    <property type="entry name" value="DNA repair protein RadC"/>
    <property type="match status" value="1"/>
</dbReference>
<dbReference type="Gene3D" id="3.40.140.10">
    <property type="entry name" value="Cytidine Deaminase, domain 2"/>
    <property type="match status" value="1"/>
</dbReference>
<dbReference type="InterPro" id="IPR037518">
    <property type="entry name" value="MPN"/>
</dbReference>
<dbReference type="InterPro" id="IPR025657">
    <property type="entry name" value="RadC_JAB"/>
</dbReference>
<dbReference type="InterPro" id="IPR010994">
    <property type="entry name" value="RuvA_2-like"/>
</dbReference>
<dbReference type="InterPro" id="IPR001405">
    <property type="entry name" value="UPF0758"/>
</dbReference>
<dbReference type="InterPro" id="IPR020891">
    <property type="entry name" value="UPF0758_CS"/>
</dbReference>
<dbReference type="InterPro" id="IPR046778">
    <property type="entry name" value="UPF0758_N"/>
</dbReference>
<dbReference type="NCBIfam" id="NF000642">
    <property type="entry name" value="PRK00024.1"/>
    <property type="match status" value="1"/>
</dbReference>
<dbReference type="NCBIfam" id="TIGR00608">
    <property type="entry name" value="radc"/>
    <property type="match status" value="1"/>
</dbReference>
<dbReference type="PANTHER" id="PTHR30471">
    <property type="entry name" value="DNA REPAIR PROTEIN RADC"/>
    <property type="match status" value="1"/>
</dbReference>
<dbReference type="PANTHER" id="PTHR30471:SF3">
    <property type="entry name" value="UPF0758 PROTEIN YEES-RELATED"/>
    <property type="match status" value="1"/>
</dbReference>
<dbReference type="Pfam" id="PF04002">
    <property type="entry name" value="RadC"/>
    <property type="match status" value="1"/>
</dbReference>
<dbReference type="Pfam" id="PF20582">
    <property type="entry name" value="UPF0758_N"/>
    <property type="match status" value="1"/>
</dbReference>
<dbReference type="SUPFAM" id="SSF102712">
    <property type="entry name" value="JAB1/MPN domain"/>
    <property type="match status" value="1"/>
</dbReference>
<dbReference type="SUPFAM" id="SSF47781">
    <property type="entry name" value="RuvA domain 2-like"/>
    <property type="match status" value="1"/>
</dbReference>
<dbReference type="PROSITE" id="PS50249">
    <property type="entry name" value="MPN"/>
    <property type="match status" value="1"/>
</dbReference>
<dbReference type="PROSITE" id="PS01302">
    <property type="entry name" value="UPF0758"/>
    <property type="match status" value="1"/>
</dbReference>
<proteinExistence type="inferred from homology"/>